<comment type="function">
    <text evidence="1">Is involved in L-lactate degradation and allows cells to grow with lactate as the sole carbon source.</text>
</comment>
<comment type="similarity">
    <text evidence="1">Belongs to the LutC/YkgG family.</text>
</comment>
<evidence type="ECO:0000255" key="1">
    <source>
        <dbReference type="HAMAP-Rule" id="MF_02104"/>
    </source>
</evidence>
<organism>
    <name type="scientific">Anoxybacillus flavithermus (strain DSM 21510 / WK1)</name>
    <dbReference type="NCBI Taxonomy" id="491915"/>
    <lineage>
        <taxon>Bacteria</taxon>
        <taxon>Bacillati</taxon>
        <taxon>Bacillota</taxon>
        <taxon>Bacilli</taxon>
        <taxon>Bacillales</taxon>
        <taxon>Anoxybacillaceae</taxon>
        <taxon>Anoxybacillus</taxon>
    </lineage>
</organism>
<reference key="1">
    <citation type="journal article" date="2008" name="Genome Biol.">
        <title>Encapsulated in silica: genome, proteome and physiology of the thermophilic bacterium Anoxybacillus flavithermus WK1.</title>
        <authorList>
            <person name="Saw J.H."/>
            <person name="Mountain B.W."/>
            <person name="Feng L."/>
            <person name="Omelchenko M.V."/>
            <person name="Hou S."/>
            <person name="Saito J.A."/>
            <person name="Stott M.B."/>
            <person name="Li D."/>
            <person name="Zhao G."/>
            <person name="Wu J."/>
            <person name="Galperin M.Y."/>
            <person name="Koonin E.V."/>
            <person name="Makarova K.S."/>
            <person name="Wolf Y.I."/>
            <person name="Rigden D.J."/>
            <person name="Dunfield P.F."/>
            <person name="Wang L."/>
            <person name="Alam M."/>
        </authorList>
    </citation>
    <scope>NUCLEOTIDE SEQUENCE [LARGE SCALE GENOMIC DNA]</scope>
    <source>
        <strain>DSM 21510 / WK1</strain>
    </source>
</reference>
<proteinExistence type="inferred from homology"/>
<sequence>MEAFLQRIASRLGRDVRTSVERPQWKHAPQQTVFQGYSQNELLDVLKQQCTRIHTTFVETNSAELRDTLQQVIAAHGGGPIVVANDERYEQFGLSSFLQREDVYVWDATRGRDNIEAAERANIGMTWSDITLAESGTVVLLNNRDQGRTISFLPTTYVALIPKSTIVPRMTQAAHIIREKHVPSCINFITGPSNSADIEMNLVVGVHGPVKATYIVITDR</sequence>
<accession>B7GLD4</accession>
<protein>
    <recommendedName>
        <fullName evidence="1">Lactate utilization protein C</fullName>
    </recommendedName>
</protein>
<dbReference type="EMBL" id="CP000922">
    <property type="protein sequence ID" value="ACJ34366.1"/>
    <property type="molecule type" value="Genomic_DNA"/>
</dbReference>
<dbReference type="RefSeq" id="WP_012575553.1">
    <property type="nucleotide sequence ID" value="NC_011567.1"/>
</dbReference>
<dbReference type="SMR" id="B7GLD4"/>
<dbReference type="STRING" id="491915.Aflv_2007"/>
<dbReference type="GeneID" id="7038259"/>
<dbReference type="KEGG" id="afl:Aflv_2007"/>
<dbReference type="PATRIC" id="fig|491915.6.peg.2060"/>
<dbReference type="eggNOG" id="COG1556">
    <property type="taxonomic scope" value="Bacteria"/>
</dbReference>
<dbReference type="HOGENOM" id="CLU_090664_1_0_9"/>
<dbReference type="Proteomes" id="UP000000742">
    <property type="component" value="Chromosome"/>
</dbReference>
<dbReference type="GO" id="GO:0006089">
    <property type="term" value="P:lactate metabolic process"/>
    <property type="evidence" value="ECO:0007669"/>
    <property type="project" value="UniProtKB-UniRule"/>
</dbReference>
<dbReference type="Gene3D" id="3.40.50.10420">
    <property type="entry name" value="NagB/RpiA/CoA transferase-like"/>
    <property type="match status" value="1"/>
</dbReference>
<dbReference type="HAMAP" id="MF_02104">
    <property type="entry name" value="LutC"/>
    <property type="match status" value="1"/>
</dbReference>
<dbReference type="InterPro" id="IPR024185">
    <property type="entry name" value="FTHF_cligase-like_sf"/>
</dbReference>
<dbReference type="InterPro" id="IPR003741">
    <property type="entry name" value="LUD_dom"/>
</dbReference>
<dbReference type="InterPro" id="IPR022823">
    <property type="entry name" value="LutC"/>
</dbReference>
<dbReference type="InterPro" id="IPR037171">
    <property type="entry name" value="NagB/RpiA_transferase-like"/>
</dbReference>
<dbReference type="PANTHER" id="PTHR43682">
    <property type="entry name" value="LACTATE UTILIZATION PROTEIN C"/>
    <property type="match status" value="1"/>
</dbReference>
<dbReference type="PANTHER" id="PTHR43682:SF1">
    <property type="entry name" value="LACTATE UTILIZATION PROTEIN C"/>
    <property type="match status" value="1"/>
</dbReference>
<dbReference type="Pfam" id="PF02589">
    <property type="entry name" value="LUD_dom"/>
    <property type="match status" value="1"/>
</dbReference>
<dbReference type="SUPFAM" id="SSF100950">
    <property type="entry name" value="NagB/RpiA/CoA transferase-like"/>
    <property type="match status" value="1"/>
</dbReference>
<gene>
    <name evidence="1" type="primary">lutC</name>
    <name type="ordered locus">Aflv_2007</name>
</gene>
<name>LUTC_ANOFW</name>
<feature type="chain" id="PRO_0000383987" description="Lactate utilization protein C">
    <location>
        <begin position="1"/>
        <end position="220"/>
    </location>
</feature>